<organism>
    <name type="scientific">Bos taurus</name>
    <name type="common">Bovine</name>
    <dbReference type="NCBI Taxonomy" id="9913"/>
    <lineage>
        <taxon>Eukaryota</taxon>
        <taxon>Metazoa</taxon>
        <taxon>Chordata</taxon>
        <taxon>Craniata</taxon>
        <taxon>Vertebrata</taxon>
        <taxon>Euteleostomi</taxon>
        <taxon>Mammalia</taxon>
        <taxon>Eutheria</taxon>
        <taxon>Laurasiatheria</taxon>
        <taxon>Artiodactyla</taxon>
        <taxon>Ruminantia</taxon>
        <taxon>Pecora</taxon>
        <taxon>Bovidae</taxon>
        <taxon>Bovinae</taxon>
        <taxon>Bos</taxon>
    </lineage>
</organism>
<keyword id="KW-0131">Cell cycle</keyword>
<keyword id="KW-0132">Cell division</keyword>
<keyword id="KW-0175">Coiled coil</keyword>
<keyword id="KW-0963">Cytoplasm</keyword>
<keyword id="KW-0206">Cytoskeleton</keyword>
<keyword id="KW-0493">Microtubule</keyword>
<keyword id="KW-0498">Mitosis</keyword>
<keyword id="KW-1185">Reference proteome</keyword>
<sequence>MEALEEKEAQVAAWLKKIFGDHPIPQYEVNAWTTEILYNLSERNRIRDRDVYLVTEDLKQKAKEYESEAKHLQDLLMESVNFSPASLSSTGSRYLNALVDSAVVLETKDTSLASFIPAVNDLTSDLFRTKSKNEEIKLELAKLEKNLTATLVLEKCLQEDLKKAELHLCTERARVDSRLQNMDFLKAKSEEFRSGIRTAEEQLSARGMDASLSHQSLVALSEKLAELKRQTMPLKKKLESYLDLMPNPSLAQVKIEEAKRELDTIEAELTKRVNMMEL</sequence>
<proteinExistence type="evidence at transcript level"/>
<feature type="chain" id="PRO_0000239658" description="HAUS augmin-like complex subunit 1">
    <location>
        <begin position="1"/>
        <end position="278"/>
    </location>
</feature>
<feature type="coiled-coil region" evidence="3">
    <location>
        <begin position="53"/>
        <end position="81"/>
    </location>
</feature>
<feature type="coiled-coil region" evidence="3">
    <location>
        <begin position="124"/>
        <end position="152"/>
    </location>
</feature>
<feature type="coiled-coil region" evidence="3">
    <location>
        <begin position="183"/>
        <end position="277"/>
    </location>
</feature>
<name>HAUS1_BOVIN</name>
<protein>
    <recommendedName>
        <fullName>HAUS augmin-like complex subunit 1</fullName>
    </recommendedName>
    <alternativeName>
        <fullName>Coiled-coil domain-containing protein 5</fullName>
    </alternativeName>
</protein>
<evidence type="ECO:0000250" key="1"/>
<evidence type="ECO:0000250" key="2">
    <source>
        <dbReference type="UniProtKB" id="Q96CS2"/>
    </source>
</evidence>
<evidence type="ECO:0000255" key="3"/>
<evidence type="ECO:0000305" key="4"/>
<reference key="1">
    <citation type="submission" date="2005-11" db="EMBL/GenBank/DDBJ databases">
        <authorList>
            <consortium name="NIH - Mammalian Gene Collection (MGC) project"/>
        </authorList>
    </citation>
    <scope>NUCLEOTIDE SEQUENCE [LARGE SCALE MRNA]</scope>
    <source>
        <strain>Crossbred X Angus</strain>
        <tissue>Liver</tissue>
    </source>
</reference>
<comment type="function">
    <text evidence="1">Contributes to mitotic spindle assembly, maintenance of centrosome integrity and completion of cytokinesis as part of the HAUS augmin-like complex.</text>
</comment>
<comment type="subunit">
    <text evidence="2">Component of the HAUS augmin-like complex. The complex interacts with the gamma-tubulin ring complex and this interaction is required for spindle assembly. Associates with microtubules. The interaction with microtubules is strong during mitosis, while it is weak or absent during interphase. It is unclear whether this interaction is direct or indirect (By similarity). Interacts with EML3 (phosphorylated form) (By similarity).</text>
</comment>
<comment type="subcellular location">
    <subcellularLocation>
        <location evidence="2">Cytoplasm</location>
    </subcellularLocation>
    <subcellularLocation>
        <location evidence="2">Cytoplasm</location>
        <location evidence="2">Cytoskeleton</location>
        <location evidence="2">Microtubule organizing center</location>
        <location evidence="2">Centrosome</location>
    </subcellularLocation>
    <subcellularLocation>
        <location evidence="2">Cytoplasm</location>
        <location evidence="2">Cytoskeleton</location>
        <location evidence="2">Spindle</location>
    </subcellularLocation>
    <subcellularLocation>
        <location evidence="2">Cytoplasm</location>
        <location evidence="2">Cytoskeleton</location>
        <location evidence="2">Spindle pole</location>
    </subcellularLocation>
    <text evidence="2">Localizes with the spindle poles in mitotic cells. In interphase, localized at the centrosome and diffusely in the cytoplasm. Localizes to mitotic spindle microtubules (By similarity).</text>
</comment>
<comment type="similarity">
    <text evidence="4">Belongs to the HAUS1 family.</text>
</comment>
<dbReference type="EMBL" id="BC110011">
    <property type="protein sequence ID" value="AAI10012.1"/>
    <property type="molecule type" value="mRNA"/>
</dbReference>
<dbReference type="RefSeq" id="NP_001033646.1">
    <property type="nucleotide sequence ID" value="NM_001038557.2"/>
</dbReference>
<dbReference type="SMR" id="Q2TBK4"/>
<dbReference type="FunCoup" id="Q2TBK4">
    <property type="interactions" value="1912"/>
</dbReference>
<dbReference type="STRING" id="9913.ENSBTAP00000003262"/>
<dbReference type="PaxDb" id="9913-ENSBTAP00000003262"/>
<dbReference type="Ensembl" id="ENSBTAT00000003262.4">
    <property type="protein sequence ID" value="ENSBTAP00000003262.3"/>
    <property type="gene ID" value="ENSBTAG00000002512.5"/>
</dbReference>
<dbReference type="GeneID" id="528378"/>
<dbReference type="KEGG" id="bta:528378"/>
<dbReference type="CTD" id="115106"/>
<dbReference type="VEuPathDB" id="HostDB:ENSBTAG00000002512"/>
<dbReference type="VGNC" id="VGNC:29757">
    <property type="gene designation" value="HAUS1"/>
</dbReference>
<dbReference type="eggNOG" id="ENOG502QSQA">
    <property type="taxonomic scope" value="Eukaryota"/>
</dbReference>
<dbReference type="GeneTree" id="ENSGT00390000006029"/>
<dbReference type="HOGENOM" id="CLU_063322_0_0_1"/>
<dbReference type="InParanoid" id="Q2TBK4"/>
<dbReference type="OMA" id="CEAQMES"/>
<dbReference type="OrthoDB" id="5372507at2759"/>
<dbReference type="TreeFam" id="TF331717"/>
<dbReference type="Reactome" id="R-BTA-2565942">
    <property type="pathway name" value="Regulation of PLK1 Activity at G2/M Transition"/>
</dbReference>
<dbReference type="Reactome" id="R-BTA-380259">
    <property type="pathway name" value="Loss of Nlp from mitotic centrosomes"/>
</dbReference>
<dbReference type="Reactome" id="R-BTA-380270">
    <property type="pathway name" value="Recruitment of mitotic centrosome proteins and complexes"/>
</dbReference>
<dbReference type="Reactome" id="R-BTA-380284">
    <property type="pathway name" value="Loss of proteins required for interphase microtubule organization from the centrosome"/>
</dbReference>
<dbReference type="Reactome" id="R-BTA-380320">
    <property type="pathway name" value="Recruitment of NuMA to mitotic centrosomes"/>
</dbReference>
<dbReference type="Reactome" id="R-BTA-5620912">
    <property type="pathway name" value="Anchoring of the basal body to the plasma membrane"/>
</dbReference>
<dbReference type="Reactome" id="R-BTA-8854518">
    <property type="pathway name" value="AURKA Activation by TPX2"/>
</dbReference>
<dbReference type="Proteomes" id="UP000009136">
    <property type="component" value="Chromosome 24"/>
</dbReference>
<dbReference type="Bgee" id="ENSBTAG00000002512">
    <property type="expression patterns" value="Expressed in semen and 110 other cell types or tissues"/>
</dbReference>
<dbReference type="GO" id="GO:0005813">
    <property type="term" value="C:centrosome"/>
    <property type="evidence" value="ECO:0007669"/>
    <property type="project" value="UniProtKB-SubCell"/>
</dbReference>
<dbReference type="GO" id="GO:0005829">
    <property type="term" value="C:cytosol"/>
    <property type="evidence" value="ECO:0000318"/>
    <property type="project" value="GO_Central"/>
</dbReference>
<dbReference type="GO" id="GO:0070652">
    <property type="term" value="C:HAUS complex"/>
    <property type="evidence" value="ECO:0000250"/>
    <property type="project" value="UniProtKB"/>
</dbReference>
<dbReference type="GO" id="GO:1990498">
    <property type="term" value="C:mitotic spindle microtubule"/>
    <property type="evidence" value="ECO:0000250"/>
    <property type="project" value="UniProtKB"/>
</dbReference>
<dbReference type="GO" id="GO:0000922">
    <property type="term" value="C:spindle pole"/>
    <property type="evidence" value="ECO:0007669"/>
    <property type="project" value="UniProtKB-SubCell"/>
</dbReference>
<dbReference type="GO" id="GO:0051301">
    <property type="term" value="P:cell division"/>
    <property type="evidence" value="ECO:0007669"/>
    <property type="project" value="UniProtKB-KW"/>
</dbReference>
<dbReference type="GO" id="GO:0007098">
    <property type="term" value="P:centrosome cycle"/>
    <property type="evidence" value="ECO:0000250"/>
    <property type="project" value="UniProtKB"/>
</dbReference>
<dbReference type="GO" id="GO:0051225">
    <property type="term" value="P:spindle assembly"/>
    <property type="evidence" value="ECO:0000250"/>
    <property type="project" value="UniProtKB"/>
</dbReference>
<dbReference type="InterPro" id="IPR026243">
    <property type="entry name" value="HAUS1"/>
</dbReference>
<dbReference type="PANTHER" id="PTHR31570">
    <property type="entry name" value="HAUS AUGMIN-LIKE COMPLEX SUBUNIT 1"/>
    <property type="match status" value="1"/>
</dbReference>
<dbReference type="PANTHER" id="PTHR31570:SF1">
    <property type="entry name" value="HAUS AUGMIN-LIKE COMPLEX SUBUNIT 1"/>
    <property type="match status" value="1"/>
</dbReference>
<dbReference type="PRINTS" id="PR02087">
    <property type="entry name" value="HAUSAUGMINL1"/>
</dbReference>
<gene>
    <name type="primary">HAUS1</name>
    <name type="synonym">CCDC5</name>
</gene>
<accession>Q2TBK4</accession>